<dbReference type="EMBL" id="AM748741">
    <property type="protein sequence ID" value="CAO03079.1"/>
    <property type="molecule type" value="Genomic_DNA"/>
</dbReference>
<dbReference type="RefSeq" id="YP_001531345.1">
    <molecule id="A8Y986-1"/>
    <property type="nucleotide sequence ID" value="NC_009951.1"/>
</dbReference>
<dbReference type="GeneID" id="5714856"/>
<dbReference type="KEGG" id="vg:5714856"/>
<dbReference type="OrthoDB" id="37610at10239"/>
<dbReference type="Proteomes" id="UP000135044">
    <property type="component" value="Genome"/>
</dbReference>
<dbReference type="GO" id="GO:0030430">
    <property type="term" value="C:host cell cytoplasm"/>
    <property type="evidence" value="ECO:0007669"/>
    <property type="project" value="UniProtKB-SubCell"/>
</dbReference>
<dbReference type="GO" id="GO:0042025">
    <property type="term" value="C:host cell nucleus"/>
    <property type="evidence" value="ECO:0007669"/>
    <property type="project" value="UniProtKB-SubCell"/>
</dbReference>
<reference key="1">
    <citation type="journal article" date="2008" name="J. Gen. Virol.">
        <title>Molecular characterization of the first polyomavirus from a New World primate: squirrel monkey polyomavirus.</title>
        <authorList>
            <person name="Verschoor E.J."/>
            <person name="Groenewoud M.J."/>
            <person name="Fagrouch Z."/>
            <person name="Kewalapat A."/>
            <person name="van Gessel S."/>
            <person name="Kik M.J."/>
            <person name="Heeney J.L."/>
        </authorList>
    </citation>
    <scope>NUCLEOTIDE SEQUENCE [GENOMIC DNA]</scope>
    <source>
        <strain>Squi0106</strain>
    </source>
</reference>
<organismHost>
    <name type="scientific">Saimiri boliviensis boliviensis</name>
    <name type="common">Bolivian squirrel monkey</name>
    <dbReference type="NCBI Taxonomy" id="39432"/>
</organismHost>
<accession>A8Y986</accession>
<keyword id="KW-0024">Alternative initiation</keyword>
<keyword id="KW-0025">Alternative splicing</keyword>
<keyword id="KW-1035">Host cytoplasm</keyword>
<keyword id="KW-1048">Host nucleus</keyword>
<keyword id="KW-0945">Host-virus interaction</keyword>
<keyword id="KW-0597">Phosphoprotein</keyword>
<keyword id="KW-1185">Reference proteome</keyword>
<feature type="chain" id="PRO_0000356263" description="Squirrel monkey agnoprotein">
    <location>
        <begin position="1"/>
        <end position="70"/>
    </location>
</feature>
<organism>
    <name type="scientific">Squirrel monkey polyomavirus</name>
    <dbReference type="NCBI Taxonomy" id="452475"/>
    <lineage>
        <taxon>Viruses</taxon>
        <taxon>Monodnaviria</taxon>
        <taxon>Shotokuvirae</taxon>
        <taxon>Cossaviricota</taxon>
        <taxon>Papovaviricetes</taxon>
        <taxon>Sepolyvirales</taxon>
        <taxon>Polyomaviridae</taxon>
        <taxon>Betapolyomavirus</taxon>
        <taxon>Betapolyomavirus saboliviensis</taxon>
    </lineage>
</organism>
<name>AGNO_POVSM</name>
<gene>
    <name type="primary">agnogene</name>
</gene>
<proteinExistence type="inferred from homology"/>
<evidence type="ECO:0000250" key="1"/>
<evidence type="ECO:0000305" key="2"/>
<sequence>MARKLMARKTPPLVGLDTVQLRVETIWLTSQMDLFVLTDKGEPRITASRASASRVATFGMTSVWLKNSCF</sequence>
<comment type="function">
    <text evidence="1">Alters the structure of the nuclear envelope. Involved in the perinuclear-nuclear localization of the capsid protein VP1 during virion assembly and maturation. May contribute to viral genome transcription and translation of viral late proteins. Plays an important role in the release of progeny virions from infected cells and in viral propagation (By similarity).</text>
</comment>
<comment type="subunit">
    <text evidence="1">Interacts with VP1. Interacts with Large T antigen. Interacts with small t antigen.</text>
</comment>
<comment type="subcellular location">
    <subcellularLocation>
        <location>Host cytoplasm</location>
    </subcellularLocation>
    <subcellularLocation>
        <location evidence="1">Host nucleus</location>
    </subcellularLocation>
</comment>
<comment type="alternative products">
    <event type="alternative splicing"/>
    <event type="alternative initiation"/>
    <isoform>
        <id>A8Y986-1</id>
        <name>Agno</name>
        <sequence type="displayed"/>
    </isoform>
    <isoform>
        <id>A8Y983-1</id>
        <name>VP1</name>
        <name>Major capsid protein VP1</name>
        <sequence type="external"/>
    </isoform>
    <isoform>
        <id>A8Y987-1</id>
        <name>VP2</name>
        <name>Minor capsid protein VP2</name>
        <sequence type="external"/>
    </isoform>
    <isoform>
        <id>A8Y987-2</id>
        <name>VP3</name>
        <name>Minor capsid protein VP3</name>
        <sequence type="external"/>
    </isoform>
    <isoform>
        <id>A8Y987-3</id>
        <name>VP4</name>
        <sequence type="external"/>
    </isoform>
</comment>
<comment type="PTM">
    <text evidence="1">Phosphorylated by host PKC. Phosphorylation alters the stability and may also have an impact on the subcellular location (By similarity).</text>
</comment>
<comment type="miscellaneous">
    <molecule>Isoform Agno</molecule>
    <text>Produced by alternative initiation of the late mRNA.</text>
</comment>
<comment type="caution">
    <text evidence="2">Encoded by the same late mRNA leader region, but very different from other primate polyomavirus agnoproteins.</text>
</comment>
<protein>
    <recommendedName>
        <fullName>Squirrel monkey agnoprotein</fullName>
    </recommendedName>
    <alternativeName>
        <fullName>Agno</fullName>
    </alternativeName>
</protein>